<reference key="1">
    <citation type="journal article" date="1996" name="Yeast">
        <title>Sequencing a cosmid clone of Saccharomyces cerevisiae chromosome XIV reveals 12 new open reading frames (ORFs) and an ancient duplication of six ORFs.</title>
        <authorList>
            <person name="Poehlmann R."/>
            <person name="Philippsen P."/>
        </authorList>
    </citation>
    <scope>NUCLEOTIDE SEQUENCE [GENOMIC DNA]</scope>
    <source>
        <strain>ATCC 96604 / S288c / FY1679</strain>
    </source>
</reference>
<reference key="2">
    <citation type="journal article" date="1997" name="Nature">
        <title>The nucleotide sequence of Saccharomyces cerevisiae chromosome XIV and its evolutionary implications.</title>
        <authorList>
            <person name="Philippsen P."/>
            <person name="Kleine K."/>
            <person name="Poehlmann R."/>
            <person name="Duesterhoeft A."/>
            <person name="Hamberg K."/>
            <person name="Hegemann J.H."/>
            <person name="Obermaier B."/>
            <person name="Urrestarazu L.A."/>
            <person name="Aert R."/>
            <person name="Albermann K."/>
            <person name="Altmann R."/>
            <person name="Andre B."/>
            <person name="Baladron V."/>
            <person name="Ballesta J.P.G."/>
            <person name="Becam A.-M."/>
            <person name="Beinhauer J.D."/>
            <person name="Boskovic J."/>
            <person name="Buitrago M.J."/>
            <person name="Bussereau F."/>
            <person name="Coster F."/>
            <person name="Crouzet M."/>
            <person name="D'Angelo M."/>
            <person name="Dal Pero F."/>
            <person name="De Antoni A."/>
            <person name="del Rey F."/>
            <person name="Doignon F."/>
            <person name="Domdey H."/>
            <person name="Dubois E."/>
            <person name="Fiedler T.A."/>
            <person name="Fleig U."/>
            <person name="Floeth M."/>
            <person name="Fritz C."/>
            <person name="Gaillardin C."/>
            <person name="Garcia-Cantalejo J.M."/>
            <person name="Glansdorff N."/>
            <person name="Goffeau A."/>
            <person name="Gueldener U."/>
            <person name="Herbert C.J."/>
            <person name="Heumann K."/>
            <person name="Heuss-Neitzel D."/>
            <person name="Hilbert H."/>
            <person name="Hinni K."/>
            <person name="Iraqui Houssaini I."/>
            <person name="Jacquet M."/>
            <person name="Jimenez A."/>
            <person name="Jonniaux J.-L."/>
            <person name="Karpfinger-Hartl L."/>
            <person name="Lanfranchi G."/>
            <person name="Lepingle A."/>
            <person name="Levesque H."/>
            <person name="Lyck R."/>
            <person name="Maftahi M."/>
            <person name="Mallet L."/>
            <person name="Maurer C.T.C."/>
            <person name="Messenguy F."/>
            <person name="Mewes H.-W."/>
            <person name="Moestl D."/>
            <person name="Nasr F."/>
            <person name="Nicaud J.-M."/>
            <person name="Niedenthal R.K."/>
            <person name="Pandolfo D."/>
            <person name="Pierard A."/>
            <person name="Piravandi E."/>
            <person name="Planta R.J."/>
            <person name="Pohl T.M."/>
            <person name="Purnelle B."/>
            <person name="Rebischung C."/>
            <person name="Remacha M.A."/>
            <person name="Revuelta J.L."/>
            <person name="Rinke M."/>
            <person name="Saiz J.E."/>
            <person name="Sartorello F."/>
            <person name="Scherens B."/>
            <person name="Sen-Gupta M."/>
            <person name="Soler-Mira A."/>
            <person name="Urbanus J.H.M."/>
            <person name="Valle G."/>
            <person name="Van Dyck L."/>
            <person name="Verhasselt P."/>
            <person name="Vierendeels F."/>
            <person name="Vissers S."/>
            <person name="Voet M."/>
            <person name="Volckaert G."/>
            <person name="Wach A."/>
            <person name="Wambutt R."/>
            <person name="Wedler H."/>
            <person name="Zollner A."/>
            <person name="Hani J."/>
        </authorList>
    </citation>
    <scope>NUCLEOTIDE SEQUENCE [LARGE SCALE GENOMIC DNA]</scope>
    <source>
        <strain>ATCC 204508 / S288c</strain>
    </source>
</reference>
<reference key="3">
    <citation type="journal article" date="2014" name="G3 (Bethesda)">
        <title>The reference genome sequence of Saccharomyces cerevisiae: Then and now.</title>
        <authorList>
            <person name="Engel S.R."/>
            <person name="Dietrich F.S."/>
            <person name="Fisk D.G."/>
            <person name="Binkley G."/>
            <person name="Balakrishnan R."/>
            <person name="Costanzo M.C."/>
            <person name="Dwight S.S."/>
            <person name="Hitz B.C."/>
            <person name="Karra K."/>
            <person name="Nash R.S."/>
            <person name="Weng S."/>
            <person name="Wong E.D."/>
            <person name="Lloyd P."/>
            <person name="Skrzypek M.S."/>
            <person name="Miyasato S.R."/>
            <person name="Simison M."/>
            <person name="Cherry J.M."/>
        </authorList>
    </citation>
    <scope>GENOME REANNOTATION</scope>
    <source>
        <strain>ATCC 204508 / S288c</strain>
    </source>
</reference>
<reference key="4">
    <citation type="journal article" date="1992" name="J. Biol. Chem.">
        <title>NH2-terminal acetylation of ribosomal proteins of Saccharomyces cerevisiae.</title>
        <authorList>
            <person name="Takakura H."/>
            <person name="Tsunasawa S."/>
            <person name="Miyagi M."/>
            <person name="Warner J.R."/>
        </authorList>
    </citation>
    <scope>PROTEIN SEQUENCE OF 2-26</scope>
    <scope>ACETYLATION AT SER-2 BY NATA</scope>
</reference>
<reference key="5">
    <citation type="journal article" date="1998" name="Yeast">
        <title>The list of cytoplasmic ribosomal proteins of Saccharomyces cerevisiae.</title>
        <authorList>
            <person name="Planta R.J."/>
            <person name="Mager W.H."/>
        </authorList>
    </citation>
    <scope>NOMENCLATURE</scope>
    <scope>SUBUNIT</scope>
</reference>
<reference key="6">
    <citation type="journal article" date="1999" name="J. Biol. Chem.">
        <title>The action of N-terminal acetyltransferases on yeast ribosomal proteins.</title>
        <authorList>
            <person name="Arnold R.J."/>
            <person name="Polevoda B."/>
            <person name="Reilly J.P."/>
            <person name="Sherman F."/>
        </authorList>
    </citation>
    <scope>CLEAVAGE OF INITIATOR METHIONINE</scope>
    <scope>ACETYLATION AT SER-2 BY NATA</scope>
</reference>
<reference key="7">
    <citation type="journal article" date="2007" name="J. Proteome Res.">
        <title>Large-scale phosphorylation analysis of alpha-factor-arrested Saccharomyces cerevisiae.</title>
        <authorList>
            <person name="Li X."/>
            <person name="Gerber S.A."/>
            <person name="Rudner A.D."/>
            <person name="Beausoleil S.A."/>
            <person name="Haas W."/>
            <person name="Villen J."/>
            <person name="Elias J.E."/>
            <person name="Gygi S.P."/>
        </authorList>
    </citation>
    <scope>PHOSPHORYLATION [LARGE SCALE ANALYSIS] AT SER-185 AND SER-187</scope>
    <scope>IDENTIFICATION BY MASS SPECTROMETRY [LARGE SCALE ANALYSIS]</scope>
    <source>
        <strain>ADR376</strain>
    </source>
</reference>
<reference key="8">
    <citation type="journal article" date="2007" name="Proc. Natl. Acad. Sci. U.S.A.">
        <title>Analysis of phosphorylation sites on proteins from Saccharomyces cerevisiae by electron transfer dissociation (ETD) mass spectrometry.</title>
        <authorList>
            <person name="Chi A."/>
            <person name="Huttenhower C."/>
            <person name="Geer L.Y."/>
            <person name="Coon J.J."/>
            <person name="Syka J.E.P."/>
            <person name="Bai D.L."/>
            <person name="Shabanowitz J."/>
            <person name="Burke D.J."/>
            <person name="Troyanskaya O.G."/>
            <person name="Hunt D.F."/>
        </authorList>
    </citation>
    <scope>PHOSPHORYLATION [LARGE SCALE ANALYSIS] AT SER-43</scope>
    <scope>IDENTIFICATION BY MASS SPECTROMETRY [LARGE SCALE ANALYSIS]</scope>
</reference>
<reference key="9">
    <citation type="journal article" date="2008" name="Mol. Cell. Proteomics">
        <title>A multidimensional chromatography technology for in-depth phosphoproteome analysis.</title>
        <authorList>
            <person name="Albuquerque C.P."/>
            <person name="Smolka M.B."/>
            <person name="Payne S.H."/>
            <person name="Bafna V."/>
            <person name="Eng J."/>
            <person name="Zhou H."/>
        </authorList>
    </citation>
    <scope>PHOSPHORYLATION [LARGE SCALE ANALYSIS] AT SER-181 AND SER-187</scope>
    <scope>IDENTIFICATION BY MASS SPECTROMETRY [LARGE SCALE ANALYSIS]</scope>
</reference>
<reference key="10">
    <citation type="journal article" date="2009" name="Science">
        <title>Global analysis of Cdk1 substrate phosphorylation sites provides insights into evolution.</title>
        <authorList>
            <person name="Holt L.J."/>
            <person name="Tuch B.B."/>
            <person name="Villen J."/>
            <person name="Johnson A.D."/>
            <person name="Gygi S.P."/>
            <person name="Morgan D.O."/>
        </authorList>
    </citation>
    <scope>PHOSPHORYLATION [LARGE SCALE ANALYSIS] AT SER-185 AND SER-187</scope>
    <scope>IDENTIFICATION BY MASS SPECTROMETRY [LARGE SCALE ANALYSIS]</scope>
</reference>
<reference key="11">
    <citation type="journal article" date="2011" name="Science">
        <title>The structure of the eukaryotic ribosome at 3.0 A resolution.</title>
        <authorList>
            <person name="Ben-Shem A."/>
            <person name="Garreau de Loubresse N."/>
            <person name="Melnikov S."/>
            <person name="Jenner L."/>
            <person name="Yusupova G."/>
            <person name="Yusupov M."/>
        </authorList>
    </citation>
    <scope>SUBUNIT</scope>
    <scope>SUBCELLULAR LOCATION</scope>
</reference>
<reference key="12">
    <citation type="journal article" date="2012" name="Proc. Natl. Acad. Sci. U.S.A.">
        <title>N-terminal acetylome analyses and functional insights of the N-terminal acetyltransferase NatB.</title>
        <authorList>
            <person name="Van Damme P."/>
            <person name="Lasa M."/>
            <person name="Polevoda B."/>
            <person name="Gazquez C."/>
            <person name="Elosegui-Artola A."/>
            <person name="Kim D.S."/>
            <person name="De Juan-Pardo E."/>
            <person name="Demeyer K."/>
            <person name="Hole K."/>
            <person name="Larrea E."/>
            <person name="Timmerman E."/>
            <person name="Prieto J."/>
            <person name="Arnesen T."/>
            <person name="Sherman F."/>
            <person name="Gevaert K."/>
            <person name="Aldabe R."/>
        </authorList>
    </citation>
    <scope>IDENTIFICATION BY MASS SPECTROMETRY [LARGE SCALE ANALYSIS]</scope>
</reference>
<reference key="13">
    <citation type="journal article" date="2012" name="Proteomics">
        <title>Sites of ubiquitin attachment in Saccharomyces cerevisiae.</title>
        <authorList>
            <person name="Starita L.M."/>
            <person name="Lo R.S."/>
            <person name="Eng J.K."/>
            <person name="von Haller P.D."/>
            <person name="Fields S."/>
        </authorList>
    </citation>
    <scope>UBIQUITINATION [LARGE SCALE ANALYSIS] AT LYS-176</scope>
    <scope>IDENTIFICATION BY MASS SPECTROMETRY [LARGE SCALE ANALYSIS]</scope>
</reference>
<reference key="14">
    <citation type="journal article" date="2014" name="Curr. Opin. Struct. Biol.">
        <title>A new system for naming ribosomal proteins.</title>
        <authorList>
            <person name="Ban N."/>
            <person name="Beckmann R."/>
            <person name="Cate J.H.D."/>
            <person name="Dinman J.D."/>
            <person name="Dragon F."/>
            <person name="Ellis S.R."/>
            <person name="Lafontaine D.L.J."/>
            <person name="Lindahl L."/>
            <person name="Liljas A."/>
            <person name="Lipton J.M."/>
            <person name="McAlear M.A."/>
            <person name="Moore P.B."/>
            <person name="Noller H.F."/>
            <person name="Ortega J."/>
            <person name="Panse V.G."/>
            <person name="Ramakrishnan V."/>
            <person name="Spahn C.M.T."/>
            <person name="Steitz T.A."/>
            <person name="Tchorzewski M."/>
            <person name="Tollervey D."/>
            <person name="Warren A.J."/>
            <person name="Williamson J.R."/>
            <person name="Wilson D."/>
            <person name="Yonath A."/>
            <person name="Yusupov M."/>
        </authorList>
    </citation>
    <scope>NOMENCLATURE</scope>
</reference>
<sequence>MSQPVVVIDAKDHLLGRLASTIAKQVLNGQKIVVVRAEALNISGEFFRNKLKYHDFLRKATAFNKTRGPFHFRAPSRILYKAIRGMVSHKTARGKAALERLKIFEGIPPPYDKKKRVVVPQALRVLRLKPGRKYTTLGKLSTSVGWKYEDVVAKLEDKRKVRSAEYYAKKRAFTKKVSSASAAASESDVAKQLASFGY</sequence>
<dbReference type="EMBL" id="X86470">
    <property type="protein sequence ID" value="CAA60191.1"/>
    <property type="molecule type" value="Genomic_DNA"/>
</dbReference>
<dbReference type="EMBL" id="X86470">
    <property type="protein sequence ID" value="CAA60192.1"/>
    <property type="molecule type" value="Genomic_DNA"/>
</dbReference>
<dbReference type="EMBL" id="Z71345">
    <property type="protein sequence ID" value="CAA95943.1"/>
    <property type="molecule type" value="Genomic_DNA"/>
</dbReference>
<dbReference type="EMBL" id="BK006947">
    <property type="protein sequence ID" value="DAA10476.1"/>
    <property type="molecule type" value="Genomic_DNA"/>
</dbReference>
<dbReference type="PIR" id="S53911">
    <property type="entry name" value="S53911"/>
</dbReference>
<dbReference type="RefSeq" id="NP_014330.1">
    <property type="nucleotide sequence ID" value="NM_001182907.1"/>
</dbReference>
<dbReference type="PDB" id="4V88">
    <property type="method" value="X-ray"/>
    <property type="resolution" value="3.00 A"/>
    <property type="chains" value="BO/DO=4-162, BO/DO=144-182"/>
</dbReference>
<dbReference type="PDB" id="6QIK">
    <property type="method" value="EM"/>
    <property type="resolution" value="3.10 A"/>
    <property type="chains" value="J=1-198"/>
</dbReference>
<dbReference type="PDB" id="6QT0">
    <property type="method" value="EM"/>
    <property type="resolution" value="3.40 A"/>
    <property type="chains" value="J=1-198"/>
</dbReference>
<dbReference type="PDB" id="6QTZ">
    <property type="method" value="EM"/>
    <property type="resolution" value="3.50 A"/>
    <property type="chains" value="J=1-198"/>
</dbReference>
<dbReference type="PDB" id="6RI5">
    <property type="method" value="EM"/>
    <property type="resolution" value="3.30 A"/>
    <property type="chains" value="J=1-198"/>
</dbReference>
<dbReference type="PDB" id="6RZZ">
    <property type="method" value="EM"/>
    <property type="resolution" value="3.20 A"/>
    <property type="chains" value="J=1-198"/>
</dbReference>
<dbReference type="PDB" id="6S05">
    <property type="method" value="EM"/>
    <property type="resolution" value="3.90 A"/>
    <property type="chains" value="J=1-198"/>
</dbReference>
<dbReference type="PDBsum" id="4V88"/>
<dbReference type="PDBsum" id="6QIK"/>
<dbReference type="PDBsum" id="6QT0"/>
<dbReference type="PDBsum" id="6QTZ"/>
<dbReference type="PDBsum" id="6RI5"/>
<dbReference type="PDBsum" id="6RZZ"/>
<dbReference type="PDBsum" id="6S05"/>
<dbReference type="EMDB" id="EMD-10068"/>
<dbReference type="EMDB" id="EMD-10071"/>
<dbReference type="EMDB" id="EMD-4560"/>
<dbReference type="EMDB" id="EMD-4630"/>
<dbReference type="EMDB" id="EMD-4636"/>
<dbReference type="EMDB" id="EMD-4884"/>
<dbReference type="SMR" id="P26785"/>
<dbReference type="BioGRID" id="35754">
    <property type="interactions" value="246"/>
</dbReference>
<dbReference type="ComplexPortal" id="CPX-1601">
    <property type="entry name" value="60S cytosolic large ribosomal subunit"/>
</dbReference>
<dbReference type="FunCoup" id="P26785">
    <property type="interactions" value="1147"/>
</dbReference>
<dbReference type="IntAct" id="P26785">
    <property type="interactions" value="103"/>
</dbReference>
<dbReference type="MINT" id="P26785"/>
<dbReference type="STRING" id="4932.YNL069C"/>
<dbReference type="iPTMnet" id="P26785"/>
<dbReference type="PaxDb" id="4932-YNL069C"/>
<dbReference type="PeptideAtlas" id="P26785"/>
<dbReference type="EnsemblFungi" id="YNL069C_mRNA">
    <property type="protein sequence ID" value="YNL069C"/>
    <property type="gene ID" value="YNL069C"/>
</dbReference>
<dbReference type="GeneID" id="855655"/>
<dbReference type="KEGG" id="sce:YNL069C"/>
<dbReference type="AGR" id="SGD:S000005013"/>
<dbReference type="SGD" id="S000005013">
    <property type="gene designation" value="RPL16B"/>
</dbReference>
<dbReference type="VEuPathDB" id="FungiDB:YNL069C"/>
<dbReference type="eggNOG" id="KOG3204">
    <property type="taxonomic scope" value="Eukaryota"/>
</dbReference>
<dbReference type="GeneTree" id="ENSGT00390000010799"/>
<dbReference type="HOGENOM" id="CLU_076922_0_0_1"/>
<dbReference type="InParanoid" id="P26785"/>
<dbReference type="OMA" id="GMLPWKT"/>
<dbReference type="OrthoDB" id="1882297at2759"/>
<dbReference type="BioCyc" id="YEAST:G3O-33099-MONOMER"/>
<dbReference type="BioGRID-ORCS" id="855655">
    <property type="hits" value="2 hits in 10 CRISPR screens"/>
</dbReference>
<dbReference type="CD-CODE" id="E03F929F">
    <property type="entry name" value="Stress granule"/>
</dbReference>
<dbReference type="PRO" id="PR:P26785"/>
<dbReference type="Proteomes" id="UP000002311">
    <property type="component" value="Chromosome XIV"/>
</dbReference>
<dbReference type="RNAct" id="P26785">
    <property type="molecule type" value="protein"/>
</dbReference>
<dbReference type="GO" id="GO:0005829">
    <property type="term" value="C:cytosol"/>
    <property type="evidence" value="ECO:0000304"/>
    <property type="project" value="Reactome"/>
</dbReference>
<dbReference type="GO" id="GO:0022625">
    <property type="term" value="C:cytosolic large ribosomal subunit"/>
    <property type="evidence" value="ECO:0000314"/>
    <property type="project" value="SGD"/>
</dbReference>
<dbReference type="GO" id="GO:0005730">
    <property type="term" value="C:nucleolus"/>
    <property type="evidence" value="ECO:0000314"/>
    <property type="project" value="SGD"/>
</dbReference>
<dbReference type="GO" id="GO:0005840">
    <property type="term" value="C:ribosome"/>
    <property type="evidence" value="ECO:0000318"/>
    <property type="project" value="GO_Central"/>
</dbReference>
<dbReference type="GO" id="GO:0003729">
    <property type="term" value="F:mRNA binding"/>
    <property type="evidence" value="ECO:0000318"/>
    <property type="project" value="GO_Central"/>
</dbReference>
<dbReference type="GO" id="GO:0003723">
    <property type="term" value="F:RNA binding"/>
    <property type="evidence" value="ECO:0000314"/>
    <property type="project" value="SGD"/>
</dbReference>
<dbReference type="GO" id="GO:0003735">
    <property type="term" value="F:structural constituent of ribosome"/>
    <property type="evidence" value="ECO:0000318"/>
    <property type="project" value="GO_Central"/>
</dbReference>
<dbReference type="GO" id="GO:0002181">
    <property type="term" value="P:cytoplasmic translation"/>
    <property type="evidence" value="ECO:0000305"/>
    <property type="project" value="SGD"/>
</dbReference>
<dbReference type="GO" id="GO:0000470">
    <property type="term" value="P:maturation of LSU-rRNA"/>
    <property type="evidence" value="ECO:0000315"/>
    <property type="project" value="SGD"/>
</dbReference>
<dbReference type="GO" id="GO:0017148">
    <property type="term" value="P:negative regulation of translation"/>
    <property type="evidence" value="ECO:0000318"/>
    <property type="project" value="GO_Central"/>
</dbReference>
<dbReference type="CDD" id="cd00392">
    <property type="entry name" value="Ribosomal_L13"/>
    <property type="match status" value="1"/>
</dbReference>
<dbReference type="FunFam" id="3.90.1180.10:FF:000002">
    <property type="entry name" value="60S ribosomal protein L16"/>
    <property type="match status" value="1"/>
</dbReference>
<dbReference type="FunFam" id="1.20.5.4280:FF:000001">
    <property type="entry name" value="60S ribosomal protein L16-A"/>
    <property type="match status" value="1"/>
</dbReference>
<dbReference type="Gene3D" id="1.20.5.4280">
    <property type="match status" value="1"/>
</dbReference>
<dbReference type="Gene3D" id="3.90.1180.10">
    <property type="entry name" value="Ribosomal protein L13"/>
    <property type="match status" value="1"/>
</dbReference>
<dbReference type="HAMAP" id="MF_01366">
    <property type="entry name" value="Ribosomal_uL13"/>
    <property type="match status" value="1"/>
</dbReference>
<dbReference type="InterPro" id="IPR005822">
    <property type="entry name" value="Ribosomal_uL13"/>
</dbReference>
<dbReference type="InterPro" id="IPR023563">
    <property type="entry name" value="Ribosomal_uL13_CS"/>
</dbReference>
<dbReference type="InterPro" id="IPR005755">
    <property type="entry name" value="Ribosomal_uL13_euk/arc"/>
</dbReference>
<dbReference type="InterPro" id="IPR036899">
    <property type="entry name" value="Ribosomal_uL13_sf"/>
</dbReference>
<dbReference type="NCBIfam" id="TIGR01077">
    <property type="entry name" value="L13_A_E"/>
    <property type="match status" value="1"/>
</dbReference>
<dbReference type="PANTHER" id="PTHR11545:SF3">
    <property type="entry name" value="LARGE RIBOSOMAL SUBUNIT PROTEIN UL13"/>
    <property type="match status" value="1"/>
</dbReference>
<dbReference type="PANTHER" id="PTHR11545">
    <property type="entry name" value="RIBOSOMAL PROTEIN L13"/>
    <property type="match status" value="1"/>
</dbReference>
<dbReference type="Pfam" id="PF00572">
    <property type="entry name" value="Ribosomal_L13"/>
    <property type="match status" value="1"/>
</dbReference>
<dbReference type="SUPFAM" id="SSF52161">
    <property type="entry name" value="Ribosomal protein L13"/>
    <property type="match status" value="1"/>
</dbReference>
<dbReference type="PROSITE" id="PS00783">
    <property type="entry name" value="RIBOSOMAL_L13"/>
    <property type="match status" value="1"/>
</dbReference>
<keyword id="KW-0002">3D-structure</keyword>
<keyword id="KW-0007">Acetylation</keyword>
<keyword id="KW-0963">Cytoplasm</keyword>
<keyword id="KW-0903">Direct protein sequencing</keyword>
<keyword id="KW-1017">Isopeptide bond</keyword>
<keyword id="KW-0597">Phosphoprotein</keyword>
<keyword id="KW-1185">Reference proteome</keyword>
<keyword id="KW-0687">Ribonucleoprotein</keyword>
<keyword id="KW-0689">Ribosomal protein</keyword>
<keyword id="KW-0832">Ubl conjugation</keyword>
<gene>
    <name evidence="5" type="primary">RPL16B</name>
    <name type="synonym">RP23</name>
    <name type="synonym">RPL21B</name>
    <name type="ordered locus">YNL069C</name>
    <name type="ORF">N2377</name>
</gene>
<evidence type="ECO:0000269" key="1">
    <source>
    </source>
</evidence>
<evidence type="ECO:0000269" key="2">
    <source>
    </source>
</evidence>
<evidence type="ECO:0000269" key="3">
    <source>
    </source>
</evidence>
<evidence type="ECO:0000303" key="4">
    <source>
    </source>
</evidence>
<evidence type="ECO:0000303" key="5">
    <source>
    </source>
</evidence>
<evidence type="ECO:0000305" key="6"/>
<evidence type="ECO:0000305" key="7">
    <source>
    </source>
</evidence>
<evidence type="ECO:0000305" key="8">
    <source>
    </source>
</evidence>
<evidence type="ECO:0007744" key="9">
    <source>
    </source>
</evidence>
<evidence type="ECO:0007744" key="10">
    <source>
    </source>
</evidence>
<evidence type="ECO:0007744" key="11">
    <source>
    </source>
</evidence>
<evidence type="ECO:0007744" key="12">
    <source>
    </source>
</evidence>
<evidence type="ECO:0007744" key="13">
    <source>
    </source>
</evidence>
<accession>P26785</accession>
<accession>D6W1B0</accession>
<comment type="function">
    <text evidence="7">Component of the ribosome, a large ribonucleoprotein complex responsible for the synthesis of proteins in the cell. The small ribosomal subunit (SSU) binds messenger RNAs (mRNAs) and translates the encoded message by selecting cognate aminoacyl-transfer RNA (tRNA) molecules. The large subunit (LSU) contains the ribosomal catalytic site termed the peptidyl transferase center (PTC), which catalyzes the formation of peptide bonds, thereby polymerizing the amino acids delivered by tRNAs into a polypeptide chain. The nascent polypeptides leave the ribosome through a tunnel in the LSU and interact with protein factors that function in enzymatic processing, targeting, and the membrane insertion of nascent chains at the exit of the ribosomal tunnel.</text>
</comment>
<comment type="subunit">
    <text evidence="3 8">Component of the large ribosomal subunit (LSU). Mature yeast ribosomes consist of a small (40S) and a large (60S) subunit. The 40S small subunit contains 1 molecule of ribosomal RNA (18S rRNA) and 33 different proteins (encoded by 57 genes). The large 60S subunit contains 3 rRNA molecules (25S, 5.8S and 5S rRNA) and 46 different proteins (encoded by 81 genes) (PubMed:22096102, PubMed:9559554).</text>
</comment>
<comment type="subcellular location">
    <subcellularLocation>
        <location evidence="3">Cytoplasm</location>
    </subcellularLocation>
</comment>
<comment type="PTM">
    <text evidence="1 2">N-terminally acetylated by acetyltransferase NatA.</text>
</comment>
<comment type="miscellaneous">
    <text evidence="6">There are 2 genes for uL13 in yeast.</text>
</comment>
<comment type="similarity">
    <text evidence="6">Belongs to the universal ribosomal protein uL13 family.</text>
</comment>
<protein>
    <recommendedName>
        <fullName evidence="4">Large ribosomal subunit protein uL13B</fullName>
    </recommendedName>
    <alternativeName>
        <fullName evidence="5">60S ribosomal protein L16-B</fullName>
    </alternativeName>
    <alternativeName>
        <fullName>L21</fullName>
    </alternativeName>
    <alternativeName>
        <fullName>RP23</fullName>
    </alternativeName>
    <alternativeName>
        <fullName>YL15</fullName>
    </alternativeName>
</protein>
<feature type="initiator methionine" description="Removed" evidence="1 2">
    <location>
        <position position="1"/>
    </location>
</feature>
<feature type="chain" id="PRO_0000133792" description="Large ribosomal subunit protein uL13B">
    <location>
        <begin position="2"/>
        <end position="198"/>
    </location>
</feature>
<feature type="modified residue" description="N-acetylserine; partial" evidence="1 2">
    <location>
        <position position="2"/>
    </location>
</feature>
<feature type="modified residue" description="Phosphoserine" evidence="9">
    <location>
        <position position="43"/>
    </location>
</feature>
<feature type="modified residue" description="Phosphoserine" evidence="11">
    <location>
        <position position="181"/>
    </location>
</feature>
<feature type="modified residue" description="Phosphoserine" evidence="10 12">
    <location>
        <position position="185"/>
    </location>
</feature>
<feature type="modified residue" description="Phosphoserine" evidence="10 11 12">
    <location>
        <position position="187"/>
    </location>
</feature>
<feature type="cross-link" description="Glycyl lysine isopeptide (Lys-Gly) (interchain with G-Cter in ubiquitin)" evidence="13">
    <location>
        <position position="176"/>
    </location>
</feature>
<feature type="sequence conflict" description="In Ref. 4; AA sequence." evidence="6" ref="4">
    <original>L</original>
    <variation>H</variation>
    <location>
        <position position="14"/>
    </location>
</feature>
<organism>
    <name type="scientific">Saccharomyces cerevisiae (strain ATCC 204508 / S288c)</name>
    <name type="common">Baker's yeast</name>
    <dbReference type="NCBI Taxonomy" id="559292"/>
    <lineage>
        <taxon>Eukaryota</taxon>
        <taxon>Fungi</taxon>
        <taxon>Dikarya</taxon>
        <taxon>Ascomycota</taxon>
        <taxon>Saccharomycotina</taxon>
        <taxon>Saccharomycetes</taxon>
        <taxon>Saccharomycetales</taxon>
        <taxon>Saccharomycetaceae</taxon>
        <taxon>Saccharomyces</taxon>
    </lineage>
</organism>
<name>RL16B_YEAST</name>
<proteinExistence type="evidence at protein level"/>